<comment type="function">
    <text evidence="1">Attaches a formyl group to the free amino group of methionyl-tRNA(fMet). The formyl group appears to play a dual role in the initiator identity of N-formylmethionyl-tRNA by promoting its recognition by IF2 and preventing the misappropriation of this tRNA by the elongation apparatus.</text>
</comment>
<comment type="catalytic activity">
    <reaction evidence="1">
        <text>L-methionyl-tRNA(fMet) + (6R)-10-formyltetrahydrofolate = N-formyl-L-methionyl-tRNA(fMet) + (6S)-5,6,7,8-tetrahydrofolate + H(+)</text>
        <dbReference type="Rhea" id="RHEA:24380"/>
        <dbReference type="Rhea" id="RHEA-COMP:9952"/>
        <dbReference type="Rhea" id="RHEA-COMP:9953"/>
        <dbReference type="ChEBI" id="CHEBI:15378"/>
        <dbReference type="ChEBI" id="CHEBI:57453"/>
        <dbReference type="ChEBI" id="CHEBI:78530"/>
        <dbReference type="ChEBI" id="CHEBI:78844"/>
        <dbReference type="ChEBI" id="CHEBI:195366"/>
        <dbReference type="EC" id="2.1.2.9"/>
    </reaction>
</comment>
<comment type="similarity">
    <text evidence="1">Belongs to the Fmt family.</text>
</comment>
<protein>
    <recommendedName>
        <fullName evidence="1">Methionyl-tRNA formyltransferase</fullName>
        <ecNumber evidence="1">2.1.2.9</ecNumber>
    </recommendedName>
</protein>
<sequence length="316" mass="33888">MSLRVVYLGTPQFAATVLKTLLDAHTHIVGIVTRADKPQKRSSKLISSPVKQLALSKNIPLLQPIKTTDPAFLAQLREWQADVFIVVAYGVILKQELLDIPTYGCYNLHAGLLPAYRGAAPIQRCIMDGGVLSGNTVIRMDAGMDTGDIANVNYVAIGEDMTAGGLAEALAASGGELLLKTLQEIEAGTVRHVPQNEAMATLAPKLTKEEGGIHWDAPASQVYAHIRGVSPAPGAWTRYLSQGKGARRLGVLSARMESFSGNYGDPGEVLGVSGEDLLIACRQGALRLRMVQPEGKALMKAKDFFNGQSRLVSKLF</sequence>
<organism>
    <name type="scientific">Chlamydia trachomatis serovar A (strain ATCC VR-571B / DSM 19440 / HAR-13)</name>
    <dbReference type="NCBI Taxonomy" id="315277"/>
    <lineage>
        <taxon>Bacteria</taxon>
        <taxon>Pseudomonadati</taxon>
        <taxon>Chlamydiota</taxon>
        <taxon>Chlamydiia</taxon>
        <taxon>Chlamydiales</taxon>
        <taxon>Chlamydiaceae</taxon>
        <taxon>Chlamydia/Chlamydophila group</taxon>
        <taxon>Chlamydia</taxon>
    </lineage>
</organism>
<gene>
    <name evidence="1" type="primary">fmt</name>
    <name type="ordered locus">CTA_0579</name>
</gene>
<name>FMT_CHLTA</name>
<accession>Q3KLG7</accession>
<reference key="1">
    <citation type="journal article" date="2005" name="Infect. Immun.">
        <title>Comparative genomic analysis of Chlamydia trachomatis oculotropic and genitotropic strains.</title>
        <authorList>
            <person name="Carlson J.H."/>
            <person name="Porcella S.F."/>
            <person name="McClarty G."/>
            <person name="Caldwell H.D."/>
        </authorList>
    </citation>
    <scope>NUCLEOTIDE SEQUENCE [LARGE SCALE GENOMIC DNA]</scope>
    <source>
        <strain>ATCC VR-571B / DSM 19440 / HAR-13</strain>
    </source>
</reference>
<evidence type="ECO:0000255" key="1">
    <source>
        <dbReference type="HAMAP-Rule" id="MF_00182"/>
    </source>
</evidence>
<keyword id="KW-0648">Protein biosynthesis</keyword>
<keyword id="KW-0808">Transferase</keyword>
<dbReference type="EC" id="2.1.2.9" evidence="1"/>
<dbReference type="EMBL" id="CP000051">
    <property type="protein sequence ID" value="AAX50805.1"/>
    <property type="molecule type" value="Genomic_DNA"/>
</dbReference>
<dbReference type="RefSeq" id="WP_011324765.1">
    <property type="nucleotide sequence ID" value="NC_007429.1"/>
</dbReference>
<dbReference type="SMR" id="Q3KLG7"/>
<dbReference type="KEGG" id="cta:CTA_0579"/>
<dbReference type="HOGENOM" id="CLU_033347_1_1_0"/>
<dbReference type="Proteomes" id="UP000002532">
    <property type="component" value="Chromosome"/>
</dbReference>
<dbReference type="GO" id="GO:0005829">
    <property type="term" value="C:cytosol"/>
    <property type="evidence" value="ECO:0007669"/>
    <property type="project" value="TreeGrafter"/>
</dbReference>
<dbReference type="GO" id="GO:0004479">
    <property type="term" value="F:methionyl-tRNA formyltransferase activity"/>
    <property type="evidence" value="ECO:0007669"/>
    <property type="project" value="UniProtKB-UniRule"/>
</dbReference>
<dbReference type="CDD" id="cd08646">
    <property type="entry name" value="FMT_core_Met-tRNA-FMT_N"/>
    <property type="match status" value="1"/>
</dbReference>
<dbReference type="CDD" id="cd08704">
    <property type="entry name" value="Met_tRNA_FMT_C"/>
    <property type="match status" value="1"/>
</dbReference>
<dbReference type="Gene3D" id="3.10.25.10">
    <property type="entry name" value="Formyl transferase, C-terminal domain"/>
    <property type="match status" value="1"/>
</dbReference>
<dbReference type="Gene3D" id="3.40.50.170">
    <property type="entry name" value="Formyl transferase, N-terminal domain"/>
    <property type="match status" value="1"/>
</dbReference>
<dbReference type="HAMAP" id="MF_00182">
    <property type="entry name" value="Formyl_trans"/>
    <property type="match status" value="1"/>
</dbReference>
<dbReference type="InterPro" id="IPR005794">
    <property type="entry name" value="Fmt"/>
</dbReference>
<dbReference type="InterPro" id="IPR005793">
    <property type="entry name" value="Formyl_trans_C"/>
</dbReference>
<dbReference type="InterPro" id="IPR037022">
    <property type="entry name" value="Formyl_trans_C_sf"/>
</dbReference>
<dbReference type="InterPro" id="IPR002376">
    <property type="entry name" value="Formyl_transf_N"/>
</dbReference>
<dbReference type="InterPro" id="IPR036477">
    <property type="entry name" value="Formyl_transf_N_sf"/>
</dbReference>
<dbReference type="InterPro" id="IPR011034">
    <property type="entry name" value="Formyl_transferase-like_C_sf"/>
</dbReference>
<dbReference type="InterPro" id="IPR001555">
    <property type="entry name" value="GART_AS"/>
</dbReference>
<dbReference type="InterPro" id="IPR044135">
    <property type="entry name" value="Met-tRNA-FMT_C"/>
</dbReference>
<dbReference type="InterPro" id="IPR041711">
    <property type="entry name" value="Met-tRNA-FMT_N"/>
</dbReference>
<dbReference type="NCBIfam" id="TIGR00460">
    <property type="entry name" value="fmt"/>
    <property type="match status" value="1"/>
</dbReference>
<dbReference type="PANTHER" id="PTHR11138">
    <property type="entry name" value="METHIONYL-TRNA FORMYLTRANSFERASE"/>
    <property type="match status" value="1"/>
</dbReference>
<dbReference type="PANTHER" id="PTHR11138:SF5">
    <property type="entry name" value="METHIONYL-TRNA FORMYLTRANSFERASE, MITOCHONDRIAL"/>
    <property type="match status" value="1"/>
</dbReference>
<dbReference type="Pfam" id="PF02911">
    <property type="entry name" value="Formyl_trans_C"/>
    <property type="match status" value="1"/>
</dbReference>
<dbReference type="Pfam" id="PF00551">
    <property type="entry name" value="Formyl_trans_N"/>
    <property type="match status" value="1"/>
</dbReference>
<dbReference type="SUPFAM" id="SSF50486">
    <property type="entry name" value="FMT C-terminal domain-like"/>
    <property type="match status" value="1"/>
</dbReference>
<dbReference type="SUPFAM" id="SSF53328">
    <property type="entry name" value="Formyltransferase"/>
    <property type="match status" value="1"/>
</dbReference>
<dbReference type="PROSITE" id="PS00373">
    <property type="entry name" value="GART"/>
    <property type="match status" value="1"/>
</dbReference>
<proteinExistence type="inferred from homology"/>
<feature type="chain" id="PRO_1000020044" description="Methionyl-tRNA formyltransferase">
    <location>
        <begin position="1"/>
        <end position="316"/>
    </location>
</feature>
<feature type="binding site" evidence="1">
    <location>
        <begin position="111"/>
        <end position="114"/>
    </location>
    <ligand>
        <name>(6S)-5,6,7,8-tetrahydrofolate</name>
        <dbReference type="ChEBI" id="CHEBI:57453"/>
    </ligand>
</feature>